<gene>
    <name type="ordered locus">SAV_751</name>
</gene>
<accession>Q82PX1</accession>
<reference key="1">
    <citation type="journal article" date="2001" name="Proc. Natl. Acad. Sci. U.S.A.">
        <title>Genome sequence of an industrial microorganism Streptomyces avermitilis: deducing the ability of producing secondary metabolites.</title>
        <authorList>
            <person name="Omura S."/>
            <person name="Ikeda H."/>
            <person name="Ishikawa J."/>
            <person name="Hanamoto A."/>
            <person name="Takahashi C."/>
            <person name="Shinose M."/>
            <person name="Takahashi Y."/>
            <person name="Horikawa H."/>
            <person name="Nakazawa H."/>
            <person name="Osonoe T."/>
            <person name="Kikuchi H."/>
            <person name="Shiba T."/>
            <person name="Sakaki Y."/>
            <person name="Hattori M."/>
        </authorList>
    </citation>
    <scope>NUCLEOTIDE SEQUENCE [LARGE SCALE GENOMIC DNA]</scope>
    <source>
        <strain>ATCC 31267 / DSM 46492 / JCM 5070 / NBRC 14893 / NCIMB 12804 / NRRL 8165 / MA-4680</strain>
    </source>
</reference>
<reference key="2">
    <citation type="journal article" date="2003" name="Nat. Biotechnol.">
        <title>Complete genome sequence and comparative analysis of the industrial microorganism Streptomyces avermitilis.</title>
        <authorList>
            <person name="Ikeda H."/>
            <person name="Ishikawa J."/>
            <person name="Hanamoto A."/>
            <person name="Shinose M."/>
            <person name="Kikuchi H."/>
            <person name="Shiba T."/>
            <person name="Sakaki Y."/>
            <person name="Hattori M."/>
            <person name="Omura S."/>
        </authorList>
    </citation>
    <scope>NUCLEOTIDE SEQUENCE [LARGE SCALE GENOMIC DNA]</scope>
    <source>
        <strain>ATCC 31267 / DSM 46492 / JCM 5070 / NBRC 14893 / NCIMB 12804 / NRRL 8165 / MA-4680</strain>
    </source>
</reference>
<organism>
    <name type="scientific">Streptomyces avermitilis (strain ATCC 31267 / DSM 46492 / JCM 5070 / NBRC 14893 / NCIMB 12804 / NRRL 8165 / MA-4680)</name>
    <dbReference type="NCBI Taxonomy" id="227882"/>
    <lineage>
        <taxon>Bacteria</taxon>
        <taxon>Bacillati</taxon>
        <taxon>Actinomycetota</taxon>
        <taxon>Actinomycetes</taxon>
        <taxon>Kitasatosporales</taxon>
        <taxon>Streptomycetaceae</taxon>
        <taxon>Streptomyces</taxon>
    </lineage>
</organism>
<comment type="function">
    <text evidence="1">ATP-dependent carboxylate-amine ligase which exhibits weak glutamate--cysteine ligase activity.</text>
</comment>
<comment type="catalytic activity">
    <reaction evidence="1">
        <text>L-cysteine + L-glutamate + ATP = gamma-L-glutamyl-L-cysteine + ADP + phosphate + H(+)</text>
        <dbReference type="Rhea" id="RHEA:13285"/>
        <dbReference type="ChEBI" id="CHEBI:15378"/>
        <dbReference type="ChEBI" id="CHEBI:29985"/>
        <dbReference type="ChEBI" id="CHEBI:30616"/>
        <dbReference type="ChEBI" id="CHEBI:35235"/>
        <dbReference type="ChEBI" id="CHEBI:43474"/>
        <dbReference type="ChEBI" id="CHEBI:58173"/>
        <dbReference type="ChEBI" id="CHEBI:456216"/>
        <dbReference type="EC" id="6.3.2.2"/>
    </reaction>
</comment>
<comment type="similarity">
    <text evidence="1">Belongs to the glutamate--cysteine ligase type 2 family. YbdK subfamily.</text>
</comment>
<feature type="chain" id="PRO_0000218220" description="Putative glutamate--cysteine ligase 2-1">
    <location>
        <begin position="1"/>
        <end position="362"/>
    </location>
</feature>
<evidence type="ECO:0000255" key="1">
    <source>
        <dbReference type="HAMAP-Rule" id="MF_01609"/>
    </source>
</evidence>
<keyword id="KW-0067">ATP-binding</keyword>
<keyword id="KW-0436">Ligase</keyword>
<keyword id="KW-0547">Nucleotide-binding</keyword>
<keyword id="KW-1185">Reference proteome</keyword>
<proteinExistence type="inferred from homology"/>
<sequence>MRTVGVEEELLLVDPETGEPKALSTAVLARAEQVDPDQDVFEKELHGQMLEFATHPQTDMAALGAEIVRCRKEAARHAGEAGCAVAALATSPLPVSPSIAMNRRYQWMAEQYGIAMQEQLTCGCHVHVAVESDEEGVAVVDRIRPWLPVLVALSANSPFWQGRDSSYESYRSRVWGRWPSAGPTELFGSPERYHRQVADMVATGVILDDGMVYFDARLSHRYPTVEIRVADVCLHPDTAQLIATLARGLVESAARDWRAGREPEDHSVSLLRLAAWQAARAGLSGELLHPVTMRRLRAESVVRALLEHVGDALADAGDLDLAHEAVAELLERGNGARVQRELLERTGSLRDTVTECVRQTQG</sequence>
<dbReference type="EC" id="6.3.2.2" evidence="1"/>
<dbReference type="EMBL" id="BA000030">
    <property type="protein sequence ID" value="BAC68461.1"/>
    <property type="molecule type" value="Genomic_DNA"/>
</dbReference>
<dbReference type="RefSeq" id="WP_010982189.1">
    <property type="nucleotide sequence ID" value="NZ_JZJK01000088.1"/>
</dbReference>
<dbReference type="SMR" id="Q82PX1"/>
<dbReference type="GeneID" id="41537877"/>
<dbReference type="KEGG" id="sma:SAVERM_751"/>
<dbReference type="eggNOG" id="COG2170">
    <property type="taxonomic scope" value="Bacteria"/>
</dbReference>
<dbReference type="HOGENOM" id="CLU_044848_0_0_11"/>
<dbReference type="OrthoDB" id="9803842at2"/>
<dbReference type="Proteomes" id="UP000000428">
    <property type="component" value="Chromosome"/>
</dbReference>
<dbReference type="GO" id="GO:0005524">
    <property type="term" value="F:ATP binding"/>
    <property type="evidence" value="ECO:0007669"/>
    <property type="project" value="UniProtKB-KW"/>
</dbReference>
<dbReference type="GO" id="GO:0004357">
    <property type="term" value="F:glutamate-cysteine ligase activity"/>
    <property type="evidence" value="ECO:0007669"/>
    <property type="project" value="UniProtKB-EC"/>
</dbReference>
<dbReference type="GO" id="GO:0042398">
    <property type="term" value="P:modified amino acid biosynthetic process"/>
    <property type="evidence" value="ECO:0007669"/>
    <property type="project" value="InterPro"/>
</dbReference>
<dbReference type="Gene3D" id="3.30.590.20">
    <property type="match status" value="1"/>
</dbReference>
<dbReference type="HAMAP" id="MF_01609">
    <property type="entry name" value="Glu_cys_ligase_2"/>
    <property type="match status" value="1"/>
</dbReference>
<dbReference type="InterPro" id="IPR050141">
    <property type="entry name" value="GCL_type2/YbdK_subfam"/>
</dbReference>
<dbReference type="InterPro" id="IPR006336">
    <property type="entry name" value="GCS2"/>
</dbReference>
<dbReference type="InterPro" id="IPR014746">
    <property type="entry name" value="Gln_synth/guanido_kin_cat_dom"/>
</dbReference>
<dbReference type="InterPro" id="IPR011793">
    <property type="entry name" value="YbdK"/>
</dbReference>
<dbReference type="NCBIfam" id="TIGR02050">
    <property type="entry name" value="gshA_cyan_rel"/>
    <property type="match status" value="1"/>
</dbReference>
<dbReference type="NCBIfam" id="NF010041">
    <property type="entry name" value="PRK13517.1-1"/>
    <property type="match status" value="1"/>
</dbReference>
<dbReference type="PANTHER" id="PTHR36510">
    <property type="entry name" value="GLUTAMATE--CYSTEINE LIGASE 2-RELATED"/>
    <property type="match status" value="1"/>
</dbReference>
<dbReference type="PANTHER" id="PTHR36510:SF1">
    <property type="entry name" value="GLUTAMATE--CYSTEINE LIGASE 2-RELATED"/>
    <property type="match status" value="1"/>
</dbReference>
<dbReference type="Pfam" id="PF04107">
    <property type="entry name" value="GCS2"/>
    <property type="match status" value="1"/>
</dbReference>
<dbReference type="SUPFAM" id="SSF55931">
    <property type="entry name" value="Glutamine synthetase/guanido kinase"/>
    <property type="match status" value="1"/>
</dbReference>
<protein>
    <recommendedName>
        <fullName evidence="1">Putative glutamate--cysteine ligase 2-1</fullName>
        <ecNumber evidence="1">6.3.2.2</ecNumber>
    </recommendedName>
    <alternativeName>
        <fullName evidence="1">Gamma-glutamylcysteine synthetase 2-1</fullName>
        <shortName evidence="1">GCS 2-1</shortName>
        <shortName evidence="1">Gamma-GCS 2-1</shortName>
    </alternativeName>
</protein>
<name>GCS21_STRAW</name>